<gene>
    <name evidence="3" type="primary">cdnE</name>
    <name type="ORF">Ga0077528_101612</name>
    <name type="ORF">IMG 2624319774</name>
</gene>
<accession>P0DUE2</accession>
<evidence type="ECO:0000269" key="1">
    <source>
    </source>
</evidence>
<evidence type="ECO:0000303" key="2">
    <source>
    </source>
</evidence>
<evidence type="ECO:0000303" key="3">
    <source>
    </source>
</evidence>
<evidence type="ECO:0000305" key="4"/>
<evidence type="ECO:0000305" key="5">
    <source>
    </source>
</evidence>
<evidence type="ECO:0007744" key="6">
    <source>
        <dbReference type="PDB" id="6WT8"/>
    </source>
</evidence>
<evidence type="ECO:0007829" key="7">
    <source>
        <dbReference type="PDB" id="6WT8"/>
    </source>
</evidence>
<protein>
    <recommendedName>
        <fullName evidence="3">c-di-GMP synthase</fullName>
        <ecNumber evidence="1">2.7.7.65</ecNumber>
    </recommendedName>
    <alternativeName>
        <fullName evidence="3">FsCdnE</fullName>
    </alternativeName>
    <alternativeName>
        <fullName>cGAS/DncV-like nucleotidyltransferase</fullName>
        <shortName>CD-NTase</shortName>
    </alternativeName>
</protein>
<feature type="chain" id="PRO_0000451886" description="c-di-GMP synthase">
    <location>
        <begin position="1"/>
        <end position="365"/>
    </location>
</feature>
<feature type="mutagenesis site" description="Reduced efficiency of c-di-GMP synthesis, makes small amounts of other cyclic-di-NMPs." evidence="1">
    <original>D</original>
    <variation>A</variation>
    <variation>N</variation>
    <variation>S</variation>
    <location>
        <position position="233"/>
    </location>
</feature>
<feature type="helix" evidence="7">
    <location>
        <begin position="5"/>
        <end position="16"/>
    </location>
</feature>
<feature type="helix" evidence="7">
    <location>
        <begin position="27"/>
        <end position="31"/>
    </location>
</feature>
<feature type="helix" evidence="7">
    <location>
        <begin position="42"/>
        <end position="44"/>
    </location>
</feature>
<feature type="helix" evidence="7">
    <location>
        <begin position="46"/>
        <end position="56"/>
    </location>
</feature>
<feature type="helix" evidence="7">
    <location>
        <begin position="60"/>
        <end position="81"/>
    </location>
</feature>
<feature type="helix" evidence="7">
    <location>
        <begin position="82"/>
        <end position="84"/>
    </location>
</feature>
<feature type="strand" evidence="7">
    <location>
        <begin position="85"/>
        <end position="91"/>
    </location>
</feature>
<feature type="helix" evidence="7">
    <location>
        <begin position="92"/>
        <end position="95"/>
    </location>
</feature>
<feature type="strand" evidence="7">
    <location>
        <begin position="106"/>
        <end position="117"/>
    </location>
</feature>
<feature type="helix" evidence="7">
    <location>
        <begin position="119"/>
        <end position="126"/>
    </location>
</feature>
<feature type="helix" evidence="7">
    <location>
        <begin position="129"/>
        <end position="131"/>
    </location>
</feature>
<feature type="helix" evidence="7">
    <location>
        <begin position="134"/>
        <end position="146"/>
    </location>
</feature>
<feature type="helix" evidence="7">
    <location>
        <begin position="154"/>
        <end position="172"/>
    </location>
</feature>
<feature type="strand" evidence="7">
    <location>
        <begin position="184"/>
        <end position="188"/>
    </location>
</feature>
<feature type="turn" evidence="7">
    <location>
        <begin position="189"/>
        <end position="192"/>
    </location>
</feature>
<feature type="strand" evidence="7">
    <location>
        <begin position="193"/>
        <end position="204"/>
    </location>
</feature>
<feature type="helix" evidence="7">
    <location>
        <begin position="206"/>
        <end position="211"/>
    </location>
</feature>
<feature type="helix" evidence="7">
    <location>
        <begin position="214"/>
        <end position="216"/>
    </location>
</feature>
<feature type="strand" evidence="7">
    <location>
        <begin position="218"/>
        <end position="222"/>
    </location>
</feature>
<feature type="turn" evidence="7">
    <location>
        <begin position="224"/>
        <end position="226"/>
    </location>
</feature>
<feature type="helix" evidence="7">
    <location>
        <begin position="235"/>
        <end position="248"/>
    </location>
</feature>
<feature type="helix" evidence="7">
    <location>
        <begin position="253"/>
        <end position="266"/>
    </location>
</feature>
<feature type="strand" evidence="7">
    <location>
        <begin position="274"/>
        <end position="276"/>
    </location>
</feature>
<feature type="helix" evidence="7">
    <location>
        <begin position="278"/>
        <end position="287"/>
    </location>
</feature>
<feature type="helix" evidence="7">
    <location>
        <begin position="290"/>
        <end position="292"/>
    </location>
</feature>
<feature type="turn" evidence="7">
    <location>
        <begin position="293"/>
        <end position="295"/>
    </location>
</feature>
<feature type="helix" evidence="7">
    <location>
        <begin position="300"/>
        <end position="314"/>
    </location>
</feature>
<feature type="helix" evidence="7">
    <location>
        <begin position="316"/>
        <end position="320"/>
    </location>
</feature>
<feature type="strand" evidence="7">
    <location>
        <begin position="333"/>
        <end position="335"/>
    </location>
</feature>
<feature type="helix" evidence="7">
    <location>
        <begin position="336"/>
        <end position="360"/>
    </location>
</feature>
<dbReference type="EC" id="2.7.7.65" evidence="1"/>
<dbReference type="PDB" id="6WT8">
    <property type="method" value="X-ray"/>
    <property type="resolution" value="2.80 A"/>
    <property type="chains" value="A=2-365"/>
</dbReference>
<dbReference type="PDBsum" id="6WT8"/>
<dbReference type="SMR" id="P0DUE2"/>
<dbReference type="GO" id="GO:0052621">
    <property type="term" value="F:diguanylate cyclase activity"/>
    <property type="evidence" value="ECO:0007669"/>
    <property type="project" value="UniProtKB-EC"/>
</dbReference>
<dbReference type="GO" id="GO:0005525">
    <property type="term" value="F:GTP binding"/>
    <property type="evidence" value="ECO:0007669"/>
    <property type="project" value="UniProtKB-KW"/>
</dbReference>
<dbReference type="GO" id="GO:0051607">
    <property type="term" value="P:defense response to virus"/>
    <property type="evidence" value="ECO:0007669"/>
    <property type="project" value="UniProtKB-KW"/>
</dbReference>
<sequence length="365" mass="42353">MQKNYLELIKKVRERSNPDLVQMTKMYSETLSGSKLFENKSIEYSDVSIYIKESMKGVAPSYTMNSKVAANKVEAHLKKSHGNLVDFERQGSVMTNTHILKENDVDLVQITNKSSEFDHKGLEKALNNTSVLKTEEILNLKKHKENFSPYQGNQIDDLKYVRLKSELVLSSTYKTVDIEKENSIYVKVTEPERDIDVVTATYYKSVDFMKTNDKSRKGIQIYNKKTGKINDVDYPFLSIERINVKDIISNRRLKNMIRFLKNIKYDCPHIENKGSIRSFHINAICYNIDVKKYEDLHYLDLVSILYQELTNIISNKSYRDNIKSVDGCEYIFEFDCAKKLIEIEFLSQELDSIIADLHNQSLLVG</sequence>
<keyword id="KW-0002">3D-structure</keyword>
<keyword id="KW-0051">Antiviral defense</keyword>
<keyword id="KW-0342">GTP-binding</keyword>
<keyword id="KW-0547">Nucleotide-binding</keyword>
<keyword id="KW-0548">Nucleotidyltransferase</keyword>
<keyword id="KW-0808">Transferase</keyword>
<reference key="1">
    <citation type="journal article" date="2020" name="Nat. Microbiol.">
        <title>Diversity and classification of cyclic-oligonucleotide-based anti-phage signalling systems.</title>
        <authorList>
            <person name="Millman A."/>
            <person name="Melamed S."/>
            <person name="Amitai G."/>
            <person name="Sorek R."/>
        </authorList>
    </citation>
    <scope>CLASSIFICATION AND NOMENCLATURE</scope>
</reference>
<reference evidence="6" key="2">
    <citation type="journal article" date="2020" name="Nature">
        <title>STING cyclic dinucleotide sensing originated in bacteria.</title>
        <authorList>
            <person name="Morehouse B.R."/>
            <person name="Govande A.A."/>
            <person name="Millman A."/>
            <person name="Keszei A.F.A."/>
            <person name="Lowey B."/>
            <person name="Ofir G."/>
            <person name="Shao S."/>
            <person name="Sorek R."/>
            <person name="Kranzusch P.J."/>
        </authorList>
    </citation>
    <scope>X-RAY CRYSTALLOGRAPHY (1.52 ANGSTROMS) OF 2-365</scope>
    <scope>FUNCTION</scope>
    <scope>CATALYTIC ACTIVITY</scope>
    <scope>SUBSTRATE SPECIFICITY</scope>
    <scope>MUTAGENESIS OF ASP-233</scope>
</reference>
<comment type="function">
    <text evidence="1 2 5">Cyclic nucleotide synthase (second messenger synthase) of a CBASS antivirus system (PubMed:32877915). CBASS (cyclic oligonucleotide-based antiphage signaling system) provides immunity against bacteriophage. The CD-NTase protein synthesizes cyclic nucleotides in response to infection; these serve as specific second messenger signals. The signals activate a diverse range of effectors, leading to bacterial cell death and thus abortive phage infection. A type I-D(GG) CBASS system (PubMed:32839535).</text>
</comment>
<comment type="function">
    <text evidence="1">Cyclic dinucleotide synthase that catalyzes the synthesis of c-di-GMP, has no activity with other NTP substrates.</text>
</comment>
<comment type="catalytic activity">
    <reaction evidence="1">
        <text>2 GTP = 3',3'-c-di-GMP + 2 diphosphate</text>
        <dbReference type="Rhea" id="RHEA:24898"/>
        <dbReference type="ChEBI" id="CHEBI:33019"/>
        <dbReference type="ChEBI" id="CHEBI:37565"/>
        <dbReference type="ChEBI" id="CHEBI:58805"/>
        <dbReference type="EC" id="2.7.7.65"/>
    </reaction>
</comment>
<comment type="miscellaneous">
    <text evidence="5">Bacteria with this enzyme do not have other c-di-GMP synthase enzymes (no GGDEF or EAL-domain containing proteins), suggesting this second messenger has been co-opted for CBASS signaling via STING activation.</text>
</comment>
<comment type="similarity">
    <text evidence="4">Belongs to the CD-NTase family. E subfamily.</text>
</comment>
<comment type="online information" name="IMG gene page for 2624319774">
    <link uri="https://img.jgi.doe.gov/cgi-bin/m/main.cgi?section=GeneDetail&amp;page=genePageMainFaa&amp;gene_oid=2624319774"/>
</comment>
<organism>
    <name type="scientific">Flavobacteriaceae sp. genome_bin_11</name>
    <dbReference type="NCBI Taxonomy" id="2778089"/>
    <lineage>
        <taxon>Bacteria</taxon>
        <taxon>Pseudomonadati</taxon>
        <taxon>Bacteroidota</taxon>
        <taxon>Flavobacteriia</taxon>
        <taxon>Flavobacteriales</taxon>
        <taxon>Flavobacteriaceae</taxon>
    </lineage>
</organism>
<name>CDNE_FLASX</name>
<proteinExistence type="evidence at protein level"/>